<protein>
    <recommendedName>
        <fullName evidence="1">Inosine/xanthosine triphosphatase</fullName>
        <shortName evidence="1">ITPase/XTPase</shortName>
        <ecNumber evidence="1">3.6.1.73</ecNumber>
    </recommendedName>
    <alternativeName>
        <fullName evidence="1">Non-canonical purine NTP phosphatase</fullName>
    </alternativeName>
    <alternativeName>
        <fullName evidence="1">Non-standard purine NTP phosphatase</fullName>
    </alternativeName>
    <alternativeName>
        <fullName evidence="1">Nucleoside-triphosphate phosphatase</fullName>
        <shortName evidence="1">NTPase</shortName>
    </alternativeName>
</protein>
<comment type="function">
    <text evidence="1">Phosphatase that hydrolyzes non-canonical purine nucleotides such as XTP and ITP to their respective diphosphate derivatives. Probably excludes non-canonical purines from DNA/RNA precursor pool, thus preventing their incorporation into DNA/RNA and avoiding chromosomal lesions.</text>
</comment>
<comment type="catalytic activity">
    <reaction evidence="1">
        <text>XTP + H2O = XDP + phosphate + H(+)</text>
        <dbReference type="Rhea" id="RHEA:28406"/>
        <dbReference type="ChEBI" id="CHEBI:15377"/>
        <dbReference type="ChEBI" id="CHEBI:15378"/>
        <dbReference type="ChEBI" id="CHEBI:43474"/>
        <dbReference type="ChEBI" id="CHEBI:59884"/>
        <dbReference type="ChEBI" id="CHEBI:61314"/>
        <dbReference type="EC" id="3.6.1.73"/>
    </reaction>
</comment>
<comment type="catalytic activity">
    <reaction evidence="1">
        <text>ITP + H2O = IDP + phosphate + H(+)</text>
        <dbReference type="Rhea" id="RHEA:28330"/>
        <dbReference type="ChEBI" id="CHEBI:15377"/>
        <dbReference type="ChEBI" id="CHEBI:15378"/>
        <dbReference type="ChEBI" id="CHEBI:43474"/>
        <dbReference type="ChEBI" id="CHEBI:58280"/>
        <dbReference type="ChEBI" id="CHEBI:61402"/>
        <dbReference type="EC" id="3.6.1.73"/>
    </reaction>
</comment>
<comment type="cofactor">
    <cofactor evidence="1">
        <name>Mg(2+)</name>
        <dbReference type="ChEBI" id="CHEBI:18420"/>
    </cofactor>
    <cofactor evidence="1">
        <name>Mn(2+)</name>
        <dbReference type="ChEBI" id="CHEBI:29035"/>
    </cofactor>
    <text evidence="1">Binds 1 divalent metal cation per subunit; can use either Mg(2+) or Mn(2+).</text>
</comment>
<comment type="subunit">
    <text evidence="1">Homodimer.</text>
</comment>
<comment type="similarity">
    <text evidence="1">Belongs to the YjjX NTPase family.</text>
</comment>
<accession>A7MIJ1</accession>
<proteinExistence type="inferred from homology"/>
<feature type="chain" id="PRO_1000056953" description="Inosine/xanthosine triphosphatase">
    <location>
        <begin position="1"/>
        <end position="171"/>
    </location>
</feature>
<feature type="binding site" evidence="1">
    <location>
        <begin position="8"/>
        <end position="13"/>
    </location>
    <ligand>
        <name>substrate</name>
    </ligand>
</feature>
<feature type="binding site" evidence="1">
    <location>
        <position position="38"/>
    </location>
    <ligand>
        <name>Mg(2+)</name>
        <dbReference type="ChEBI" id="CHEBI:18420"/>
    </ligand>
</feature>
<feature type="binding site" evidence="1">
    <location>
        <position position="68"/>
    </location>
    <ligand>
        <name>Mg(2+)</name>
        <dbReference type="ChEBI" id="CHEBI:18420"/>
    </ligand>
</feature>
<name>NCPP_CROS8</name>
<gene>
    <name type="ordered locus">ESA_03344</name>
</gene>
<organism>
    <name type="scientific">Cronobacter sakazakii (strain ATCC BAA-894)</name>
    <name type="common">Enterobacter sakazakii</name>
    <dbReference type="NCBI Taxonomy" id="290339"/>
    <lineage>
        <taxon>Bacteria</taxon>
        <taxon>Pseudomonadati</taxon>
        <taxon>Pseudomonadota</taxon>
        <taxon>Gammaproteobacteria</taxon>
        <taxon>Enterobacterales</taxon>
        <taxon>Enterobacteriaceae</taxon>
        <taxon>Cronobacter</taxon>
    </lineage>
</organism>
<reference key="1">
    <citation type="journal article" date="2010" name="PLoS ONE">
        <title>Genome sequence of Cronobacter sakazakii BAA-894 and comparative genomic hybridization analysis with other Cronobacter species.</title>
        <authorList>
            <person name="Kucerova E."/>
            <person name="Clifton S.W."/>
            <person name="Xia X.Q."/>
            <person name="Long F."/>
            <person name="Porwollik S."/>
            <person name="Fulton L."/>
            <person name="Fronick C."/>
            <person name="Minx P."/>
            <person name="Kyung K."/>
            <person name="Warren W."/>
            <person name="Fulton R."/>
            <person name="Feng D."/>
            <person name="Wollam A."/>
            <person name="Shah N."/>
            <person name="Bhonagiri V."/>
            <person name="Nash W.E."/>
            <person name="Hallsworth-Pepin K."/>
            <person name="Wilson R.K."/>
            <person name="McClelland M."/>
            <person name="Forsythe S.J."/>
        </authorList>
    </citation>
    <scope>NUCLEOTIDE SEQUENCE [LARGE SCALE GENOMIC DNA]</scope>
    <source>
        <strain>ATCC BAA-894</strain>
    </source>
</reference>
<evidence type="ECO:0000255" key="1">
    <source>
        <dbReference type="HAMAP-Rule" id="MF_00648"/>
    </source>
</evidence>
<dbReference type="EC" id="3.6.1.73" evidence="1"/>
<dbReference type="EMBL" id="CP000783">
    <property type="protein sequence ID" value="ABU78565.1"/>
    <property type="molecule type" value="Genomic_DNA"/>
</dbReference>
<dbReference type="SMR" id="A7MIJ1"/>
<dbReference type="KEGG" id="esa:ESA_03344"/>
<dbReference type="PATRIC" id="fig|290339.8.peg.2971"/>
<dbReference type="HOGENOM" id="CLU_087417_1_0_6"/>
<dbReference type="Proteomes" id="UP000000260">
    <property type="component" value="Chromosome"/>
</dbReference>
<dbReference type="GO" id="GO:0103023">
    <property type="term" value="F:ITPase activity"/>
    <property type="evidence" value="ECO:0007669"/>
    <property type="project" value="UniProtKB-EC"/>
</dbReference>
<dbReference type="GO" id="GO:0046872">
    <property type="term" value="F:metal ion binding"/>
    <property type="evidence" value="ECO:0007669"/>
    <property type="project" value="UniProtKB-KW"/>
</dbReference>
<dbReference type="GO" id="GO:0000166">
    <property type="term" value="F:nucleotide binding"/>
    <property type="evidence" value="ECO:0007669"/>
    <property type="project" value="UniProtKB-KW"/>
</dbReference>
<dbReference type="GO" id="GO:0017111">
    <property type="term" value="F:ribonucleoside triphosphate phosphatase activity"/>
    <property type="evidence" value="ECO:0000250"/>
    <property type="project" value="UniProtKB"/>
</dbReference>
<dbReference type="GO" id="GO:0009117">
    <property type="term" value="P:nucleotide metabolic process"/>
    <property type="evidence" value="ECO:0007669"/>
    <property type="project" value="UniProtKB-KW"/>
</dbReference>
<dbReference type="GO" id="GO:0006772">
    <property type="term" value="P:thiamine metabolic process"/>
    <property type="evidence" value="ECO:0007669"/>
    <property type="project" value="TreeGrafter"/>
</dbReference>
<dbReference type="FunFam" id="3.90.950.10:FF:000002">
    <property type="entry name" value="Inosine/xanthosine triphosphatase"/>
    <property type="match status" value="1"/>
</dbReference>
<dbReference type="Gene3D" id="3.90.950.10">
    <property type="match status" value="1"/>
</dbReference>
<dbReference type="HAMAP" id="MF_00648">
    <property type="entry name" value="Non_canon_purine_NTPase_YjjX"/>
    <property type="match status" value="1"/>
</dbReference>
<dbReference type="InterPro" id="IPR029001">
    <property type="entry name" value="ITPase-like_fam"/>
</dbReference>
<dbReference type="InterPro" id="IPR002786">
    <property type="entry name" value="Non_canon_purine_NTPase"/>
</dbReference>
<dbReference type="InterPro" id="IPR026533">
    <property type="entry name" value="NTPase/PRRC1"/>
</dbReference>
<dbReference type="InterPro" id="IPR050299">
    <property type="entry name" value="YjjX_NTPase"/>
</dbReference>
<dbReference type="NCBIfam" id="TIGR00258">
    <property type="entry name" value="inosine/xanthosine triphosphatase"/>
    <property type="match status" value="1"/>
</dbReference>
<dbReference type="NCBIfam" id="NF003459">
    <property type="entry name" value="PRK05074.1"/>
    <property type="match status" value="1"/>
</dbReference>
<dbReference type="PANTHER" id="PTHR34699">
    <property type="match status" value="1"/>
</dbReference>
<dbReference type="PANTHER" id="PTHR34699:SF2">
    <property type="entry name" value="NON-CANONICAL PURINE NTP PHOSPHATASE_PRRC1 DOMAIN-CONTAINING PROTEIN"/>
    <property type="match status" value="1"/>
</dbReference>
<dbReference type="Pfam" id="PF01931">
    <property type="entry name" value="NTPase_I-T"/>
    <property type="match status" value="1"/>
</dbReference>
<dbReference type="SUPFAM" id="SSF52972">
    <property type="entry name" value="ITPase-like"/>
    <property type="match status" value="1"/>
</dbReference>
<sequence>MYHVVCATTNPAKIQAILRAFSEIFGEASCHIDAVSVDSGVPEQPLGSEETRTGARQRVINARALRPQADYWVAIEAGIDDDSTFSWVVIESADQRGEARSATLPLPAAILNEVRAGKALGPVMSAWTGIDEIGRKEGAIGIFTAGKLTRSSVYHQAVILALSPFHNAIYR</sequence>
<keyword id="KW-0378">Hydrolase</keyword>
<keyword id="KW-0460">Magnesium</keyword>
<keyword id="KW-0464">Manganese</keyword>
<keyword id="KW-0479">Metal-binding</keyword>
<keyword id="KW-0546">Nucleotide metabolism</keyword>
<keyword id="KW-0547">Nucleotide-binding</keyword>
<keyword id="KW-1185">Reference proteome</keyword>